<protein>
    <recommendedName>
        <fullName>Gene 1 protein</fullName>
    </recommendedName>
    <alternativeName>
        <fullName>G1P</fullName>
    </alternativeName>
</protein>
<organismHost>
    <name type="scientific">Escherichia coli</name>
    <dbReference type="NCBI Taxonomy" id="562"/>
</organismHost>
<evidence type="ECO:0000250" key="1"/>
<evidence type="ECO:0000255" key="2"/>
<evidence type="ECO:0000305" key="3"/>
<proteinExistence type="inferred from homology"/>
<comment type="function">
    <text evidence="1">Isoform G1P plays an essential role in phage assembly. It is required to increase the number of adhesion zones between the inner and outer membranes of the host cell. The extrusion of neo-synthesized phages occurs at these adhesion sites. May be involved with G4P in creating zone through which the phage assembled and extruded (By similarity).</text>
</comment>
<comment type="function">
    <text evidence="1">Isoform G11P is also involved in phage assembly, probably playing a structural role in the formation of the phage assembly site.</text>
</comment>
<comment type="subunit">
    <text evidence="1">Interacts with G4P; this interaction results in a complex that spans the inner an outer host membranes.</text>
</comment>
<comment type="subcellular location">
    <subcellularLocation>
        <location evidence="3">Host membrane</location>
        <topology evidence="3">Single-pass membrane protein</topology>
    </subcellularLocation>
</comment>
<comment type="alternative products">
    <event type="alternative initiation"/>
    <isoform>
        <id>P03656-1</id>
        <name>G1P</name>
        <name>Gene 1 protein</name>
        <sequence type="displayed"/>
    </isoform>
    <isoform>
        <id>P03656-2</id>
        <name>G11P</name>
        <name>Gene 11 protein</name>
        <sequence type="described" ref="VSP_037126"/>
    </isoform>
</comment>
<comment type="miscellaneous">
    <molecule>Isoform G11P</molecule>
    <text evidence="3">N-formylation on Met-300.</text>
</comment>
<comment type="similarity">
    <text evidence="3">Belongs to the inovirus G1P protein family.</text>
</comment>
<accession>P03656</accession>
<reference key="1">
    <citation type="journal article" date="1980" name="Gene">
        <title>Nucleotide sequence of the filamentous bacteriophage M13 DNA genome: comparison with phage fd.</title>
        <authorList>
            <person name="van Wezenbeek P.M.G.F."/>
            <person name="Hulsebos T.J.M."/>
            <person name="Schoenmakers J.G.G."/>
        </authorList>
    </citation>
    <scope>NUCLEOTIDE SEQUENCE [GENOMIC DNA]</scope>
</reference>
<dbReference type="EMBL" id="V00604">
    <property type="protein sequence ID" value="CAA23864.1"/>
    <property type="molecule type" value="Genomic_DNA"/>
</dbReference>
<dbReference type="PIR" id="B04262">
    <property type="entry name" value="Z1BPM3"/>
</dbReference>
<dbReference type="RefSeq" id="NP_510893.1">
    <molecule id="P03656-1"/>
    <property type="nucleotide sequence ID" value="NC_003287.2"/>
</dbReference>
<dbReference type="RefSeq" id="YP_010774620.1">
    <molecule id="P03656-1"/>
    <property type="nucleotide sequence ID" value="NC_074765.1"/>
</dbReference>
<dbReference type="SMR" id="P03656"/>
<dbReference type="GeneID" id="80510932"/>
<dbReference type="GeneID" id="927336"/>
<dbReference type="KEGG" id="vg:927336"/>
<dbReference type="OrthoDB" id="9125at10239"/>
<dbReference type="Proteomes" id="UP000002111">
    <property type="component" value="Genome"/>
</dbReference>
<dbReference type="GO" id="GO:0033644">
    <property type="term" value="C:host cell membrane"/>
    <property type="evidence" value="ECO:0007669"/>
    <property type="project" value="UniProtKB-SubCell"/>
</dbReference>
<dbReference type="GO" id="GO:0016020">
    <property type="term" value="C:membrane"/>
    <property type="evidence" value="ECO:0007669"/>
    <property type="project" value="UniProtKB-KW"/>
</dbReference>
<dbReference type="GO" id="GO:0005524">
    <property type="term" value="F:ATP binding"/>
    <property type="evidence" value="ECO:0007669"/>
    <property type="project" value="UniProtKB-KW"/>
</dbReference>
<dbReference type="GO" id="GO:0099045">
    <property type="term" value="P:viral extrusion"/>
    <property type="evidence" value="ECO:0007669"/>
    <property type="project" value="UniProtKB-KW"/>
</dbReference>
<dbReference type="Gene3D" id="3.40.50.300">
    <property type="entry name" value="P-loop containing nucleotide triphosphate hydrolases"/>
    <property type="match status" value="1"/>
</dbReference>
<dbReference type="InterPro" id="IPR027417">
    <property type="entry name" value="P-loop_NTPase"/>
</dbReference>
<dbReference type="InterPro" id="IPR008900">
    <property type="entry name" value="Zot_N"/>
</dbReference>
<dbReference type="Pfam" id="PF05707">
    <property type="entry name" value="Zot"/>
    <property type="match status" value="1"/>
</dbReference>
<name>G1P_BPM13</name>
<organism>
    <name type="scientific">Enterobacteria phage M13</name>
    <name type="common">Bacteriophage M13</name>
    <dbReference type="NCBI Taxonomy" id="1977402"/>
    <lineage>
        <taxon>Viruses</taxon>
        <taxon>Monodnaviria</taxon>
        <taxon>Loebvirae</taxon>
        <taxon>Hofneiviricota</taxon>
        <taxon>Faserviricetes</taxon>
        <taxon>Tubulavirales</taxon>
        <taxon>Inoviridae</taxon>
        <taxon>Inovirus</taxon>
    </lineage>
</organism>
<gene>
    <name type="primary">I</name>
</gene>
<sequence>MAVYFVTGKLGSGKTLVSVGKIQDKIVAGCKIATNLDLRLQNLPQVGRFAKTPRVLRIPDKPSISDLLAIGRGNDSYDENKNGLLVLDECGTWFNTRSWNDKERQPIIDWFLHARKLGWDIIFLVQDLSIVDKQARSALAEHVVYCRRLDRITLPFVGTLYSLITGSKMPLPKLHVGVVKYGDSQLSPTVERWLYTGKNLYNAYDTKQAFSSNYDSGVYSYLTPYLSHGRYFKPLNLGQKMKLTKIYLKKFSRVLCLAIGFASAFTYSYITQPKPEVKKVVSQTYDFDKFTIDSSQRLNLSYRYVFKDSKGKLINSDDLQKQGYSLTYIDLCTVSIKKGNSNEIVKCN</sequence>
<keyword id="KW-0024">Alternative initiation</keyword>
<keyword id="KW-0067">ATP-binding</keyword>
<keyword id="KW-0291">Formylation</keyword>
<keyword id="KW-1043">Host membrane</keyword>
<keyword id="KW-0472">Membrane</keyword>
<keyword id="KW-0547">Nucleotide-binding</keyword>
<keyword id="KW-1185">Reference proteome</keyword>
<keyword id="KW-0812">Transmembrane</keyword>
<keyword id="KW-1133">Transmembrane helix</keyword>
<keyword id="KW-1249">Viral extrusion</keyword>
<keyword id="KW-1188">Viral release from host cell</keyword>
<feature type="chain" id="PRO_0000098206" description="Gene 1 protein">
    <location>
        <begin position="1"/>
        <end position="348"/>
    </location>
</feature>
<feature type="transmembrane region" description="Helical" evidence="2">
    <location>
        <begin position="254"/>
        <end position="270"/>
    </location>
</feature>
<feature type="binding site" evidence="2">
    <location>
        <begin position="8"/>
        <end position="15"/>
    </location>
    <ligand>
        <name>ATP</name>
        <dbReference type="ChEBI" id="CHEBI:30616"/>
    </ligand>
</feature>
<feature type="splice variant" id="VSP_037126" description="In isoform G11P." evidence="3">
    <location>
        <begin position="1"/>
        <end position="240"/>
    </location>
</feature>